<reference key="1">
    <citation type="journal article" date="2002" name="Lancet">
        <title>Genome and virulence determinants of high virulence community-acquired MRSA.</title>
        <authorList>
            <person name="Baba T."/>
            <person name="Takeuchi F."/>
            <person name="Kuroda M."/>
            <person name="Yuzawa H."/>
            <person name="Aoki K."/>
            <person name="Oguchi A."/>
            <person name="Nagai Y."/>
            <person name="Iwama N."/>
            <person name="Asano K."/>
            <person name="Naimi T."/>
            <person name="Kuroda H."/>
            <person name="Cui L."/>
            <person name="Yamamoto K."/>
            <person name="Hiramatsu K."/>
        </authorList>
    </citation>
    <scope>NUCLEOTIDE SEQUENCE [LARGE SCALE GENOMIC DNA]</scope>
    <source>
        <strain>MW2</strain>
    </source>
</reference>
<organism>
    <name type="scientific">Staphylococcus aureus (strain MW2)</name>
    <dbReference type="NCBI Taxonomy" id="196620"/>
    <lineage>
        <taxon>Bacteria</taxon>
        <taxon>Bacillati</taxon>
        <taxon>Bacillota</taxon>
        <taxon>Bacilli</taxon>
        <taxon>Bacillales</taxon>
        <taxon>Staphylococcaceae</taxon>
        <taxon>Staphylococcus</taxon>
    </lineage>
</organism>
<sequence length="190" mass="22213">MIRFEIHGDNLTITDAIRNYIEEKIGKLERYFNDVPNAVAHVKVKTYSNSATKIEVTIPLKNVTLRAEERNDDLYAGIDLINNKLERQVRKYKTRINRKSRDRGDQEVFVAELQEMQETQVDNDAYDDNEIEIIRSKEFSLKPMDSEEAVLQMNLLGHDFFVFTDRETDGTSIVYRRKDGKYGLIQTSEQ</sequence>
<protein>
    <recommendedName>
        <fullName evidence="1">Ribosome hibernation promotion factor</fullName>
        <shortName evidence="1">HPF</shortName>
    </recommendedName>
</protein>
<dbReference type="EMBL" id="BA000033">
    <property type="protein sequence ID" value="BAB94579.1"/>
    <property type="molecule type" value="Genomic_DNA"/>
</dbReference>
<dbReference type="RefSeq" id="WP_000617735.1">
    <property type="nucleotide sequence ID" value="NC_003923.1"/>
</dbReference>
<dbReference type="SMR" id="Q7A1G5"/>
<dbReference type="KEGG" id="sam:MW0714"/>
<dbReference type="HOGENOM" id="CLU_071472_0_3_9"/>
<dbReference type="GO" id="GO:0022627">
    <property type="term" value="C:cytosolic small ribosomal subunit"/>
    <property type="evidence" value="ECO:0007669"/>
    <property type="project" value="TreeGrafter"/>
</dbReference>
<dbReference type="GO" id="GO:0043024">
    <property type="term" value="F:ribosomal small subunit binding"/>
    <property type="evidence" value="ECO:0007669"/>
    <property type="project" value="TreeGrafter"/>
</dbReference>
<dbReference type="GO" id="GO:0045900">
    <property type="term" value="P:negative regulation of translational elongation"/>
    <property type="evidence" value="ECO:0007669"/>
    <property type="project" value="TreeGrafter"/>
</dbReference>
<dbReference type="CDD" id="cd00552">
    <property type="entry name" value="RaiA"/>
    <property type="match status" value="1"/>
</dbReference>
<dbReference type="FunFam" id="3.30.160.100:FF:000003">
    <property type="entry name" value="Ribosome hibernation promoting factor"/>
    <property type="match status" value="1"/>
</dbReference>
<dbReference type="FunFam" id="3.30.505.50:FF:000001">
    <property type="entry name" value="Ribosome hibernation promoting factor"/>
    <property type="match status" value="1"/>
</dbReference>
<dbReference type="Gene3D" id="3.30.160.100">
    <property type="entry name" value="Ribosome hibernation promotion factor-like"/>
    <property type="match status" value="1"/>
</dbReference>
<dbReference type="Gene3D" id="3.30.505.50">
    <property type="entry name" value="Sigma 54 modulation/S30EA ribosomal protein, C-terminal domain"/>
    <property type="match status" value="1"/>
</dbReference>
<dbReference type="HAMAP" id="MF_00839">
    <property type="entry name" value="HPF"/>
    <property type="match status" value="1"/>
</dbReference>
<dbReference type="InterPro" id="IPR050574">
    <property type="entry name" value="HPF/YfiA_ribosome-assoc"/>
</dbReference>
<dbReference type="InterPro" id="IPR034694">
    <property type="entry name" value="HPF_long/plastid"/>
</dbReference>
<dbReference type="InterPro" id="IPR036567">
    <property type="entry name" value="RHF-like"/>
</dbReference>
<dbReference type="InterPro" id="IPR003489">
    <property type="entry name" value="RHF/RaiA"/>
</dbReference>
<dbReference type="InterPro" id="IPR032528">
    <property type="entry name" value="Ribosom_S30AE_C"/>
</dbReference>
<dbReference type="InterPro" id="IPR038416">
    <property type="entry name" value="Ribosom_S30AE_C_sf"/>
</dbReference>
<dbReference type="NCBIfam" id="TIGR00741">
    <property type="entry name" value="yfiA"/>
    <property type="match status" value="1"/>
</dbReference>
<dbReference type="PANTHER" id="PTHR33231">
    <property type="entry name" value="30S RIBOSOMAL PROTEIN"/>
    <property type="match status" value="1"/>
</dbReference>
<dbReference type="PANTHER" id="PTHR33231:SF1">
    <property type="entry name" value="30S RIBOSOMAL PROTEIN"/>
    <property type="match status" value="1"/>
</dbReference>
<dbReference type="Pfam" id="PF16321">
    <property type="entry name" value="Ribosom_S30AE_C"/>
    <property type="match status" value="1"/>
</dbReference>
<dbReference type="Pfam" id="PF02482">
    <property type="entry name" value="Ribosomal_S30AE"/>
    <property type="match status" value="1"/>
</dbReference>
<dbReference type="SUPFAM" id="SSF69754">
    <property type="entry name" value="Ribosome binding protein Y (YfiA homologue)"/>
    <property type="match status" value="1"/>
</dbReference>
<comment type="function">
    <text evidence="1">Required for dimerization of active 70S ribosomes into 100S ribosomes in stationary phase; 100S ribosomes are translationally inactive and sometimes present during exponential growth.</text>
</comment>
<comment type="subunit">
    <text evidence="1">Interacts with 100S ribosomes.</text>
</comment>
<comment type="subcellular location">
    <subcellularLocation>
        <location evidence="1">Cytoplasm</location>
    </subcellularLocation>
</comment>
<comment type="similarity">
    <text evidence="1">Belongs to the HPF/YfiA ribosome-associated protein family. Long HPF subfamily.</text>
</comment>
<feature type="chain" id="PRO_0000291317" description="Ribosome hibernation promotion factor">
    <location>
        <begin position="1"/>
        <end position="190"/>
    </location>
</feature>
<name>HPF_STAAW</name>
<keyword id="KW-0963">Cytoplasm</keyword>
<keyword id="KW-0810">Translation regulation</keyword>
<evidence type="ECO:0000255" key="1">
    <source>
        <dbReference type="HAMAP-Rule" id="MF_00839"/>
    </source>
</evidence>
<accession>Q7A1G5</accession>
<proteinExistence type="inferred from homology"/>
<gene>
    <name evidence="1" type="primary">hpf</name>
    <name type="ordered locus">MW0714</name>
</gene>